<evidence type="ECO:0000255" key="1">
    <source>
        <dbReference type="HAMAP-Rule" id="MF_00013"/>
    </source>
</evidence>
<evidence type="ECO:0000255" key="2">
    <source>
        <dbReference type="PROSITE-ProRule" id="PRU01067"/>
    </source>
</evidence>
<dbReference type="EC" id="2.3.1.181" evidence="1"/>
<dbReference type="EMBL" id="FM954972">
    <property type="protein sequence ID" value="CAV17703.1"/>
    <property type="molecule type" value="Genomic_DNA"/>
</dbReference>
<dbReference type="SMR" id="B7VKE7"/>
<dbReference type="STRING" id="575788.VS_0708"/>
<dbReference type="KEGG" id="vsp:VS_0708"/>
<dbReference type="eggNOG" id="COG0321">
    <property type="taxonomic scope" value="Bacteria"/>
</dbReference>
<dbReference type="HOGENOM" id="CLU_035168_3_1_6"/>
<dbReference type="UniPathway" id="UPA00538">
    <property type="reaction ID" value="UER00592"/>
</dbReference>
<dbReference type="Proteomes" id="UP000009100">
    <property type="component" value="Chromosome 1"/>
</dbReference>
<dbReference type="GO" id="GO:0005737">
    <property type="term" value="C:cytoplasm"/>
    <property type="evidence" value="ECO:0007669"/>
    <property type="project" value="UniProtKB-SubCell"/>
</dbReference>
<dbReference type="GO" id="GO:0033819">
    <property type="term" value="F:lipoyl(octanoyl) transferase activity"/>
    <property type="evidence" value="ECO:0007669"/>
    <property type="project" value="UniProtKB-EC"/>
</dbReference>
<dbReference type="GO" id="GO:0036211">
    <property type="term" value="P:protein modification process"/>
    <property type="evidence" value="ECO:0007669"/>
    <property type="project" value="InterPro"/>
</dbReference>
<dbReference type="CDD" id="cd16444">
    <property type="entry name" value="LipB"/>
    <property type="match status" value="1"/>
</dbReference>
<dbReference type="FunFam" id="3.30.930.10:FF:000020">
    <property type="entry name" value="Octanoyltransferase"/>
    <property type="match status" value="1"/>
</dbReference>
<dbReference type="Gene3D" id="3.30.930.10">
    <property type="entry name" value="Bira Bifunctional Protein, Domain 2"/>
    <property type="match status" value="1"/>
</dbReference>
<dbReference type="HAMAP" id="MF_00013">
    <property type="entry name" value="LipB"/>
    <property type="match status" value="1"/>
</dbReference>
<dbReference type="InterPro" id="IPR045864">
    <property type="entry name" value="aa-tRNA-synth_II/BPL/LPL"/>
</dbReference>
<dbReference type="InterPro" id="IPR004143">
    <property type="entry name" value="BPL_LPL_catalytic"/>
</dbReference>
<dbReference type="InterPro" id="IPR000544">
    <property type="entry name" value="Octanoyltransferase"/>
</dbReference>
<dbReference type="InterPro" id="IPR020605">
    <property type="entry name" value="Octanoyltransferase_CS"/>
</dbReference>
<dbReference type="NCBIfam" id="TIGR00214">
    <property type="entry name" value="lipB"/>
    <property type="match status" value="1"/>
</dbReference>
<dbReference type="NCBIfam" id="NF010922">
    <property type="entry name" value="PRK14342.1"/>
    <property type="match status" value="1"/>
</dbReference>
<dbReference type="PANTHER" id="PTHR10993:SF7">
    <property type="entry name" value="LIPOYLTRANSFERASE 2, MITOCHONDRIAL-RELATED"/>
    <property type="match status" value="1"/>
</dbReference>
<dbReference type="PANTHER" id="PTHR10993">
    <property type="entry name" value="OCTANOYLTRANSFERASE"/>
    <property type="match status" value="1"/>
</dbReference>
<dbReference type="Pfam" id="PF21948">
    <property type="entry name" value="LplA-B_cat"/>
    <property type="match status" value="1"/>
</dbReference>
<dbReference type="PIRSF" id="PIRSF016262">
    <property type="entry name" value="LPLase"/>
    <property type="match status" value="1"/>
</dbReference>
<dbReference type="SUPFAM" id="SSF55681">
    <property type="entry name" value="Class II aaRS and biotin synthetases"/>
    <property type="match status" value="1"/>
</dbReference>
<dbReference type="PROSITE" id="PS51733">
    <property type="entry name" value="BPL_LPL_CATALYTIC"/>
    <property type="match status" value="1"/>
</dbReference>
<dbReference type="PROSITE" id="PS01313">
    <property type="entry name" value="LIPB"/>
    <property type="match status" value="1"/>
</dbReference>
<protein>
    <recommendedName>
        <fullName evidence="1">Octanoyltransferase</fullName>
        <ecNumber evidence="1">2.3.1.181</ecNumber>
    </recommendedName>
    <alternativeName>
        <fullName evidence="1">Lipoate-protein ligase B</fullName>
    </alternativeName>
    <alternativeName>
        <fullName evidence="1">Lipoyl/octanoyl transferase</fullName>
    </alternativeName>
    <alternativeName>
        <fullName evidence="1">Octanoyl-[acyl-carrier-protein]-protein N-octanoyltransferase</fullName>
    </alternativeName>
</protein>
<proteinExistence type="inferred from homology"/>
<keyword id="KW-0012">Acyltransferase</keyword>
<keyword id="KW-0963">Cytoplasm</keyword>
<keyword id="KW-0808">Transferase</keyword>
<accession>B7VKE7</accession>
<feature type="chain" id="PRO_1000116555" description="Octanoyltransferase">
    <location>
        <begin position="1"/>
        <end position="219"/>
    </location>
</feature>
<feature type="domain" description="BPL/LPL catalytic" evidence="2">
    <location>
        <begin position="31"/>
        <end position="206"/>
    </location>
</feature>
<feature type="active site" description="Acyl-thioester intermediate" evidence="1">
    <location>
        <position position="168"/>
    </location>
</feature>
<feature type="binding site" evidence="1">
    <location>
        <begin position="70"/>
        <end position="77"/>
    </location>
    <ligand>
        <name>substrate</name>
    </ligand>
</feature>
<feature type="binding site" evidence="1">
    <location>
        <begin position="137"/>
        <end position="139"/>
    </location>
    <ligand>
        <name>substrate</name>
    </ligand>
</feature>
<feature type="binding site" evidence="1">
    <location>
        <begin position="150"/>
        <end position="152"/>
    </location>
    <ligand>
        <name>substrate</name>
    </ligand>
</feature>
<feature type="site" description="Lowers pKa of active site Cys" evidence="1">
    <location>
        <position position="134"/>
    </location>
</feature>
<organism>
    <name type="scientific">Vibrio atlanticus (strain LGP32)</name>
    <name type="common">Vibrio splendidus (strain Mel32)</name>
    <dbReference type="NCBI Taxonomy" id="575788"/>
    <lineage>
        <taxon>Bacteria</taxon>
        <taxon>Pseudomonadati</taxon>
        <taxon>Pseudomonadota</taxon>
        <taxon>Gammaproteobacteria</taxon>
        <taxon>Vibrionales</taxon>
        <taxon>Vibrionaceae</taxon>
        <taxon>Vibrio</taxon>
    </lineage>
</organism>
<reference key="1">
    <citation type="submission" date="2009-02" db="EMBL/GenBank/DDBJ databases">
        <title>Vibrio splendidus str. LGP32 complete genome.</title>
        <authorList>
            <person name="Mazel D."/>
            <person name="Le Roux F."/>
        </authorList>
    </citation>
    <scope>NUCLEOTIDE SEQUENCE [LARGE SCALE GENOMIC DNA]</scope>
    <source>
        <strain>LGP32</strain>
    </source>
</reference>
<comment type="function">
    <text evidence="1">Catalyzes the transfer of endogenously produced octanoic acid from octanoyl-acyl-carrier-protein onto the lipoyl domains of lipoate-dependent enzymes. Lipoyl-ACP can also act as a substrate although octanoyl-ACP is likely to be the physiological substrate.</text>
</comment>
<comment type="catalytic activity">
    <reaction evidence="1">
        <text>octanoyl-[ACP] + L-lysyl-[protein] = N(6)-octanoyl-L-lysyl-[protein] + holo-[ACP] + H(+)</text>
        <dbReference type="Rhea" id="RHEA:17665"/>
        <dbReference type="Rhea" id="RHEA-COMP:9636"/>
        <dbReference type="Rhea" id="RHEA-COMP:9685"/>
        <dbReference type="Rhea" id="RHEA-COMP:9752"/>
        <dbReference type="Rhea" id="RHEA-COMP:9928"/>
        <dbReference type="ChEBI" id="CHEBI:15378"/>
        <dbReference type="ChEBI" id="CHEBI:29969"/>
        <dbReference type="ChEBI" id="CHEBI:64479"/>
        <dbReference type="ChEBI" id="CHEBI:78463"/>
        <dbReference type="ChEBI" id="CHEBI:78809"/>
        <dbReference type="EC" id="2.3.1.181"/>
    </reaction>
</comment>
<comment type="pathway">
    <text evidence="1">Protein modification; protein lipoylation via endogenous pathway; protein N(6)-(lipoyl)lysine from octanoyl-[acyl-carrier-protein]: step 1/2.</text>
</comment>
<comment type="subcellular location">
    <subcellularLocation>
        <location evidence="1">Cytoplasm</location>
    </subcellularLocation>
</comment>
<comment type="miscellaneous">
    <text evidence="1">In the reaction, the free carboxyl group of octanoic acid is attached via an amide linkage to the epsilon-amino group of a specific lysine residue of lipoyl domains of lipoate-dependent enzymes.</text>
</comment>
<comment type="similarity">
    <text evidence="1">Belongs to the LipB family.</text>
</comment>
<gene>
    <name evidence="1" type="primary">lipB</name>
    <name type="ordered locus">VS_0708</name>
</gene>
<sequence length="219" mass="24503">MQNKLIVKKLGRQDYEPVWKAMHKFTDERTDEDVDQIWLVEHNPVFTQGQAGKAEHVLNAGDIPVIQSDRGGQVTYHGPGQLVAYFLINIRRKKFGVRDLVTHIENLVINTLKAYNIDSTARPDAPGVYVDGKKICSLGLRIRRGCSFHGLALNVDMDLSPFQRINPCGYQGMEMAQVSQLGGPSELENVEQQLIQELVELLGYDQVDIQATSNITAEA</sequence>
<name>LIPB_VIBA3</name>